<gene>
    <name evidence="1" type="primary">tyrS</name>
    <name type="ordered locus">Cj1271c</name>
</gene>
<protein>
    <recommendedName>
        <fullName evidence="1">Tyrosine--tRNA ligase</fullName>
        <ecNumber evidence="1">6.1.1.1</ecNumber>
    </recommendedName>
    <alternativeName>
        <fullName evidence="1">Tyrosyl-tRNA synthetase</fullName>
        <shortName evidence="1">TyrRS</shortName>
    </alternativeName>
</protein>
<reference key="1">
    <citation type="journal article" date="2000" name="Nature">
        <title>The genome sequence of the food-borne pathogen Campylobacter jejuni reveals hypervariable sequences.</title>
        <authorList>
            <person name="Parkhill J."/>
            <person name="Wren B.W."/>
            <person name="Mungall K.L."/>
            <person name="Ketley J.M."/>
            <person name="Churcher C.M."/>
            <person name="Basham D."/>
            <person name="Chillingworth T."/>
            <person name="Davies R.M."/>
            <person name="Feltwell T."/>
            <person name="Holroyd S."/>
            <person name="Jagels K."/>
            <person name="Karlyshev A.V."/>
            <person name="Moule S."/>
            <person name="Pallen M.J."/>
            <person name="Penn C.W."/>
            <person name="Quail M.A."/>
            <person name="Rajandream M.A."/>
            <person name="Rutherford K.M."/>
            <person name="van Vliet A.H.M."/>
            <person name="Whitehead S."/>
            <person name="Barrell B.G."/>
        </authorList>
    </citation>
    <scope>NUCLEOTIDE SEQUENCE [LARGE SCALE GENOMIC DNA]</scope>
    <source>
        <strain>ATCC 700819 / NCTC 11168</strain>
    </source>
</reference>
<keyword id="KW-0030">Aminoacyl-tRNA synthetase</keyword>
<keyword id="KW-0067">ATP-binding</keyword>
<keyword id="KW-0963">Cytoplasm</keyword>
<keyword id="KW-0436">Ligase</keyword>
<keyword id="KW-0547">Nucleotide-binding</keyword>
<keyword id="KW-0648">Protein biosynthesis</keyword>
<keyword id="KW-1185">Reference proteome</keyword>
<keyword id="KW-0694">RNA-binding</keyword>
<comment type="function">
    <text evidence="1">Catalyzes the attachment of tyrosine to tRNA(Tyr) in a two-step reaction: tyrosine is first activated by ATP to form Tyr-AMP and then transferred to the acceptor end of tRNA(Tyr).</text>
</comment>
<comment type="catalytic activity">
    <reaction evidence="1">
        <text>tRNA(Tyr) + L-tyrosine + ATP = L-tyrosyl-tRNA(Tyr) + AMP + diphosphate + H(+)</text>
        <dbReference type="Rhea" id="RHEA:10220"/>
        <dbReference type="Rhea" id="RHEA-COMP:9706"/>
        <dbReference type="Rhea" id="RHEA-COMP:9707"/>
        <dbReference type="ChEBI" id="CHEBI:15378"/>
        <dbReference type="ChEBI" id="CHEBI:30616"/>
        <dbReference type="ChEBI" id="CHEBI:33019"/>
        <dbReference type="ChEBI" id="CHEBI:58315"/>
        <dbReference type="ChEBI" id="CHEBI:78442"/>
        <dbReference type="ChEBI" id="CHEBI:78536"/>
        <dbReference type="ChEBI" id="CHEBI:456215"/>
        <dbReference type="EC" id="6.1.1.1"/>
    </reaction>
</comment>
<comment type="subunit">
    <text evidence="1">Homodimer.</text>
</comment>
<comment type="subcellular location">
    <subcellularLocation>
        <location evidence="1">Cytoplasm</location>
    </subcellularLocation>
</comment>
<comment type="similarity">
    <text evidence="1">Belongs to the class-I aminoacyl-tRNA synthetase family. TyrS type 2 subfamily.</text>
</comment>
<sequence>MDIKKILAEVKRGCAELIDEERIENLIKNYYEKGENFFIKAGFDPTAPDLHLGHSVVLTKMAFLQKHGAIVQFLIGDFTGQIGDPSGKSATRKKLDKEQVLINAKTYKTQVFKVLDKEKTQIKFNSTWLNELGAAGIVELTSTFSVARMLERDDFTKRFKEQSPISICEFLYPLLQGYDSVALKSDIEMGGTDQKFNLLMGRQLQRVYNIGKEQAVIMMPLLEGLDGVNKMSKSLNNYIGVTEKANDMYAKILSISDELMFRYYELLSQKSLEEIAQIKKDIEQGNLHPKKAKENLALEITERFHSKEEANNAKSEFDRIHSQNALPSDMAEFEIQGKIWLAKALVECGLESSTSAARRSISANAVSVNSQKVSDEQMYLEQGEYILQIGKRKFAKLKVKE</sequence>
<proteinExistence type="inferred from homology"/>
<name>SYY_CAMJE</name>
<evidence type="ECO:0000255" key="1">
    <source>
        <dbReference type="HAMAP-Rule" id="MF_02007"/>
    </source>
</evidence>
<organism>
    <name type="scientific">Campylobacter jejuni subsp. jejuni serotype O:2 (strain ATCC 700819 / NCTC 11168)</name>
    <dbReference type="NCBI Taxonomy" id="192222"/>
    <lineage>
        <taxon>Bacteria</taxon>
        <taxon>Pseudomonadati</taxon>
        <taxon>Campylobacterota</taxon>
        <taxon>Epsilonproteobacteria</taxon>
        <taxon>Campylobacterales</taxon>
        <taxon>Campylobacteraceae</taxon>
        <taxon>Campylobacter</taxon>
    </lineage>
</organism>
<dbReference type="EC" id="6.1.1.1" evidence="1"/>
<dbReference type="EMBL" id="AL111168">
    <property type="protein sequence ID" value="CAL35386.1"/>
    <property type="molecule type" value="Genomic_DNA"/>
</dbReference>
<dbReference type="PIR" id="A81335">
    <property type="entry name" value="A81335"/>
</dbReference>
<dbReference type="RefSeq" id="WP_002858315.1">
    <property type="nucleotide sequence ID" value="NZ_SZUC01000001.1"/>
</dbReference>
<dbReference type="RefSeq" id="YP_002344662.1">
    <property type="nucleotide sequence ID" value="NC_002163.1"/>
</dbReference>
<dbReference type="SMR" id="Q9PN27"/>
<dbReference type="IntAct" id="Q9PN27">
    <property type="interactions" value="23"/>
</dbReference>
<dbReference type="STRING" id="192222.Cj1271c"/>
<dbReference type="PaxDb" id="192222-Cj1271c"/>
<dbReference type="EnsemblBacteria" id="CAL35386">
    <property type="protein sequence ID" value="CAL35386"/>
    <property type="gene ID" value="Cj1271c"/>
</dbReference>
<dbReference type="GeneID" id="905562"/>
<dbReference type="KEGG" id="cje:Cj1271c"/>
<dbReference type="PATRIC" id="fig|192222.6.peg.1254"/>
<dbReference type="eggNOG" id="COG0162">
    <property type="taxonomic scope" value="Bacteria"/>
</dbReference>
<dbReference type="HOGENOM" id="CLU_024003_5_0_7"/>
<dbReference type="OrthoDB" id="9804243at2"/>
<dbReference type="Proteomes" id="UP000000799">
    <property type="component" value="Chromosome"/>
</dbReference>
<dbReference type="GO" id="GO:0005829">
    <property type="term" value="C:cytosol"/>
    <property type="evidence" value="ECO:0007669"/>
    <property type="project" value="TreeGrafter"/>
</dbReference>
<dbReference type="GO" id="GO:0005524">
    <property type="term" value="F:ATP binding"/>
    <property type="evidence" value="ECO:0007669"/>
    <property type="project" value="UniProtKB-UniRule"/>
</dbReference>
<dbReference type="GO" id="GO:0003723">
    <property type="term" value="F:RNA binding"/>
    <property type="evidence" value="ECO:0007669"/>
    <property type="project" value="UniProtKB-KW"/>
</dbReference>
<dbReference type="GO" id="GO:0004831">
    <property type="term" value="F:tyrosine-tRNA ligase activity"/>
    <property type="evidence" value="ECO:0007669"/>
    <property type="project" value="UniProtKB-UniRule"/>
</dbReference>
<dbReference type="GO" id="GO:0006437">
    <property type="term" value="P:tyrosyl-tRNA aminoacylation"/>
    <property type="evidence" value="ECO:0007669"/>
    <property type="project" value="UniProtKB-UniRule"/>
</dbReference>
<dbReference type="CDD" id="cd00165">
    <property type="entry name" value="S4"/>
    <property type="match status" value="1"/>
</dbReference>
<dbReference type="CDD" id="cd00805">
    <property type="entry name" value="TyrRS_core"/>
    <property type="match status" value="1"/>
</dbReference>
<dbReference type="FunFam" id="1.10.240.10:FF:000006">
    <property type="entry name" value="Tyrosine--tRNA ligase"/>
    <property type="match status" value="1"/>
</dbReference>
<dbReference type="FunFam" id="3.40.50.620:FF:000061">
    <property type="entry name" value="Tyrosine--tRNA ligase"/>
    <property type="match status" value="1"/>
</dbReference>
<dbReference type="Gene3D" id="3.40.50.620">
    <property type="entry name" value="HUPs"/>
    <property type="match status" value="1"/>
</dbReference>
<dbReference type="Gene3D" id="3.10.290.10">
    <property type="entry name" value="RNA-binding S4 domain"/>
    <property type="match status" value="1"/>
</dbReference>
<dbReference type="Gene3D" id="1.10.240.10">
    <property type="entry name" value="Tyrosyl-Transfer RNA Synthetase"/>
    <property type="match status" value="1"/>
</dbReference>
<dbReference type="HAMAP" id="MF_02007">
    <property type="entry name" value="Tyr_tRNA_synth_type2"/>
    <property type="match status" value="1"/>
</dbReference>
<dbReference type="InterPro" id="IPR001412">
    <property type="entry name" value="aa-tRNA-synth_I_CS"/>
</dbReference>
<dbReference type="InterPro" id="IPR002305">
    <property type="entry name" value="aa-tRNA-synth_Ic"/>
</dbReference>
<dbReference type="InterPro" id="IPR014729">
    <property type="entry name" value="Rossmann-like_a/b/a_fold"/>
</dbReference>
<dbReference type="InterPro" id="IPR002942">
    <property type="entry name" value="S4_RNA-bd"/>
</dbReference>
<dbReference type="InterPro" id="IPR036986">
    <property type="entry name" value="S4_RNA-bd_sf"/>
</dbReference>
<dbReference type="InterPro" id="IPR054608">
    <property type="entry name" value="SYY-like_C"/>
</dbReference>
<dbReference type="InterPro" id="IPR002307">
    <property type="entry name" value="Tyr-tRNA-ligase"/>
</dbReference>
<dbReference type="InterPro" id="IPR024088">
    <property type="entry name" value="Tyr-tRNA-ligase_bac-type"/>
</dbReference>
<dbReference type="InterPro" id="IPR024108">
    <property type="entry name" value="Tyr-tRNA-ligase_bac_2"/>
</dbReference>
<dbReference type="NCBIfam" id="TIGR00234">
    <property type="entry name" value="tyrS"/>
    <property type="match status" value="1"/>
</dbReference>
<dbReference type="PANTHER" id="PTHR11766:SF1">
    <property type="entry name" value="TYROSINE--TRNA LIGASE"/>
    <property type="match status" value="1"/>
</dbReference>
<dbReference type="PANTHER" id="PTHR11766">
    <property type="entry name" value="TYROSYL-TRNA SYNTHETASE"/>
    <property type="match status" value="1"/>
</dbReference>
<dbReference type="Pfam" id="PF22421">
    <property type="entry name" value="SYY_C-terminal"/>
    <property type="match status" value="1"/>
</dbReference>
<dbReference type="Pfam" id="PF00579">
    <property type="entry name" value="tRNA-synt_1b"/>
    <property type="match status" value="1"/>
</dbReference>
<dbReference type="PRINTS" id="PR01040">
    <property type="entry name" value="TRNASYNTHTYR"/>
</dbReference>
<dbReference type="SMART" id="SM00363">
    <property type="entry name" value="S4"/>
    <property type="match status" value="1"/>
</dbReference>
<dbReference type="SUPFAM" id="SSF55174">
    <property type="entry name" value="Alpha-L RNA-binding motif"/>
    <property type="match status" value="1"/>
</dbReference>
<dbReference type="SUPFAM" id="SSF52374">
    <property type="entry name" value="Nucleotidylyl transferase"/>
    <property type="match status" value="1"/>
</dbReference>
<dbReference type="PROSITE" id="PS00178">
    <property type="entry name" value="AA_TRNA_LIGASE_I"/>
    <property type="match status" value="1"/>
</dbReference>
<dbReference type="PROSITE" id="PS50889">
    <property type="entry name" value="S4"/>
    <property type="match status" value="1"/>
</dbReference>
<feature type="chain" id="PRO_0000236705" description="Tyrosine--tRNA ligase">
    <location>
        <begin position="1"/>
        <end position="401"/>
    </location>
</feature>
<feature type="domain" description="S4 RNA-binding" evidence="1">
    <location>
        <begin position="339"/>
        <end position="399"/>
    </location>
</feature>
<feature type="short sequence motif" description="'HIGH' region">
    <location>
        <begin position="45"/>
        <end position="54"/>
    </location>
</feature>
<feature type="short sequence motif" description="'KMSKS' region">
    <location>
        <begin position="230"/>
        <end position="234"/>
    </location>
</feature>
<feature type="binding site" evidence="1">
    <location>
        <position position="233"/>
    </location>
    <ligand>
        <name>ATP</name>
        <dbReference type="ChEBI" id="CHEBI:30616"/>
    </ligand>
</feature>
<accession>Q9PN27</accession>
<accession>Q0P8Y5</accession>